<reference key="1">
    <citation type="submission" date="2003-10" db="EMBL/GenBank/DDBJ databases">
        <title>The complete genome sequence of the alkaliphilic Bacillus clausii KSM-K16.</title>
        <authorList>
            <person name="Takaki Y."/>
            <person name="Kageyama Y."/>
            <person name="Shimamura S."/>
            <person name="Suzuki H."/>
            <person name="Nishi S."/>
            <person name="Hatada Y."/>
            <person name="Kawai S."/>
            <person name="Ito S."/>
            <person name="Horikoshi K."/>
        </authorList>
    </citation>
    <scope>NUCLEOTIDE SEQUENCE [LARGE SCALE GENOMIC DNA]</scope>
    <source>
        <strain>KSM-K16</strain>
    </source>
</reference>
<feature type="chain" id="PRO_0000237771" description="2-C-methyl-D-erythritol 4-phosphate cytidylyltransferase">
    <location>
        <begin position="1"/>
        <end position="229"/>
    </location>
</feature>
<feature type="site" description="Transition state stabilizer" evidence="1">
    <location>
        <position position="15"/>
    </location>
</feature>
<feature type="site" description="Transition state stabilizer" evidence="1">
    <location>
        <position position="22"/>
    </location>
</feature>
<feature type="site" description="Positions MEP for the nucleophilic attack" evidence="1">
    <location>
        <position position="152"/>
    </location>
</feature>
<feature type="site" description="Positions MEP for the nucleophilic attack" evidence="1">
    <location>
        <position position="208"/>
    </location>
</feature>
<comment type="function">
    <text evidence="1">Catalyzes the formation of 4-diphosphocytidyl-2-C-methyl-D-erythritol from CTP and 2-C-methyl-D-erythritol 4-phosphate (MEP).</text>
</comment>
<comment type="catalytic activity">
    <reaction evidence="1">
        <text>2-C-methyl-D-erythritol 4-phosphate + CTP + H(+) = 4-CDP-2-C-methyl-D-erythritol + diphosphate</text>
        <dbReference type="Rhea" id="RHEA:13429"/>
        <dbReference type="ChEBI" id="CHEBI:15378"/>
        <dbReference type="ChEBI" id="CHEBI:33019"/>
        <dbReference type="ChEBI" id="CHEBI:37563"/>
        <dbReference type="ChEBI" id="CHEBI:57823"/>
        <dbReference type="ChEBI" id="CHEBI:58262"/>
        <dbReference type="EC" id="2.7.7.60"/>
    </reaction>
</comment>
<comment type="pathway">
    <text evidence="1">Isoprenoid biosynthesis; isopentenyl diphosphate biosynthesis via DXP pathway; isopentenyl diphosphate from 1-deoxy-D-xylulose 5-phosphate: step 2/6.</text>
</comment>
<comment type="similarity">
    <text evidence="1">Belongs to the IspD/TarI cytidylyltransferase family. IspD subfamily.</text>
</comment>
<sequence length="229" mass="25169">MEYAAIVLAAGQGKRMKAGMNKQLIDLNGIPLIVHSLRLFEEDAACKAIWLVVSETERQTMEKLVAEYQIGKVKGLVNGGAERQDSVYAGLKGMEEAEIVLIHDGARPFVAKPILTKLADEAAQSGAAIAAVPVKDTVKLADKNSVARTVERKNLWAAQTPQAFQYELVLAAHEDAKKHGFLGTDDASLVERLDKRVTIVESDYLNIKLTTEEDLLFAETILKKRENQL</sequence>
<keyword id="KW-0414">Isoprene biosynthesis</keyword>
<keyword id="KW-0548">Nucleotidyltransferase</keyword>
<keyword id="KW-1185">Reference proteome</keyword>
<keyword id="KW-0808">Transferase</keyword>
<proteinExistence type="inferred from homology"/>
<gene>
    <name evidence="1" type="primary">ispD</name>
    <name type="ordered locus">ABC0125</name>
</gene>
<dbReference type="EC" id="2.7.7.60" evidence="1"/>
<dbReference type="EMBL" id="AP006627">
    <property type="protein sequence ID" value="BAD62668.1"/>
    <property type="molecule type" value="Genomic_DNA"/>
</dbReference>
<dbReference type="RefSeq" id="WP_011244989.1">
    <property type="nucleotide sequence ID" value="NC_006582.1"/>
</dbReference>
<dbReference type="SMR" id="Q5WLT7"/>
<dbReference type="STRING" id="66692.ABC0125"/>
<dbReference type="KEGG" id="bcl:ABC0125"/>
<dbReference type="eggNOG" id="COG1211">
    <property type="taxonomic scope" value="Bacteria"/>
</dbReference>
<dbReference type="HOGENOM" id="CLU_061281_2_2_9"/>
<dbReference type="OrthoDB" id="9806837at2"/>
<dbReference type="UniPathway" id="UPA00056">
    <property type="reaction ID" value="UER00093"/>
</dbReference>
<dbReference type="Proteomes" id="UP000001168">
    <property type="component" value="Chromosome"/>
</dbReference>
<dbReference type="GO" id="GO:0050518">
    <property type="term" value="F:2-C-methyl-D-erythritol 4-phosphate cytidylyltransferase activity"/>
    <property type="evidence" value="ECO:0007669"/>
    <property type="project" value="UniProtKB-UniRule"/>
</dbReference>
<dbReference type="GO" id="GO:0019288">
    <property type="term" value="P:isopentenyl diphosphate biosynthetic process, methylerythritol 4-phosphate pathway"/>
    <property type="evidence" value="ECO:0007669"/>
    <property type="project" value="UniProtKB-UniRule"/>
</dbReference>
<dbReference type="CDD" id="cd02516">
    <property type="entry name" value="CDP-ME_synthetase"/>
    <property type="match status" value="1"/>
</dbReference>
<dbReference type="FunFam" id="3.90.550.10:FF:000003">
    <property type="entry name" value="2-C-methyl-D-erythritol 4-phosphate cytidylyltransferase"/>
    <property type="match status" value="1"/>
</dbReference>
<dbReference type="Gene3D" id="3.90.550.10">
    <property type="entry name" value="Spore Coat Polysaccharide Biosynthesis Protein SpsA, Chain A"/>
    <property type="match status" value="1"/>
</dbReference>
<dbReference type="HAMAP" id="MF_00108">
    <property type="entry name" value="IspD"/>
    <property type="match status" value="1"/>
</dbReference>
<dbReference type="InterPro" id="IPR001228">
    <property type="entry name" value="IspD"/>
</dbReference>
<dbReference type="InterPro" id="IPR034683">
    <property type="entry name" value="IspD/TarI"/>
</dbReference>
<dbReference type="InterPro" id="IPR050088">
    <property type="entry name" value="IspD/TarI_cytidylyltransf_bact"/>
</dbReference>
<dbReference type="InterPro" id="IPR018294">
    <property type="entry name" value="ISPD_synthase_CS"/>
</dbReference>
<dbReference type="InterPro" id="IPR029044">
    <property type="entry name" value="Nucleotide-diphossugar_trans"/>
</dbReference>
<dbReference type="NCBIfam" id="TIGR00453">
    <property type="entry name" value="ispD"/>
    <property type="match status" value="1"/>
</dbReference>
<dbReference type="PANTHER" id="PTHR32125">
    <property type="entry name" value="2-C-METHYL-D-ERYTHRITOL 4-PHOSPHATE CYTIDYLYLTRANSFERASE, CHLOROPLASTIC"/>
    <property type="match status" value="1"/>
</dbReference>
<dbReference type="PANTHER" id="PTHR32125:SF4">
    <property type="entry name" value="2-C-METHYL-D-ERYTHRITOL 4-PHOSPHATE CYTIDYLYLTRANSFERASE, CHLOROPLASTIC"/>
    <property type="match status" value="1"/>
</dbReference>
<dbReference type="Pfam" id="PF01128">
    <property type="entry name" value="IspD"/>
    <property type="match status" value="1"/>
</dbReference>
<dbReference type="SUPFAM" id="SSF53448">
    <property type="entry name" value="Nucleotide-diphospho-sugar transferases"/>
    <property type="match status" value="1"/>
</dbReference>
<dbReference type="PROSITE" id="PS01295">
    <property type="entry name" value="ISPD"/>
    <property type="match status" value="1"/>
</dbReference>
<accession>Q5WLT7</accession>
<evidence type="ECO:0000255" key="1">
    <source>
        <dbReference type="HAMAP-Rule" id="MF_00108"/>
    </source>
</evidence>
<name>ISPD_SHOC1</name>
<protein>
    <recommendedName>
        <fullName evidence="1">2-C-methyl-D-erythritol 4-phosphate cytidylyltransferase</fullName>
        <ecNumber evidence="1">2.7.7.60</ecNumber>
    </recommendedName>
    <alternativeName>
        <fullName evidence="1">4-diphosphocytidyl-2C-methyl-D-erythritol synthase</fullName>
    </alternativeName>
    <alternativeName>
        <fullName evidence="1">MEP cytidylyltransferase</fullName>
        <shortName evidence="1">MCT</shortName>
    </alternativeName>
</protein>
<organism>
    <name type="scientific">Shouchella clausii (strain KSM-K16)</name>
    <name type="common">Alkalihalobacillus clausii</name>
    <dbReference type="NCBI Taxonomy" id="66692"/>
    <lineage>
        <taxon>Bacteria</taxon>
        <taxon>Bacillati</taxon>
        <taxon>Bacillota</taxon>
        <taxon>Bacilli</taxon>
        <taxon>Bacillales</taxon>
        <taxon>Bacillaceae</taxon>
        <taxon>Shouchella</taxon>
    </lineage>
</organism>